<comment type="subcellular location">
    <subcellularLocation>
        <location>Plastid</location>
        <location>Chloroplast</location>
    </subcellularLocation>
</comment>
<comment type="similarity">
    <text evidence="1">Belongs to the bacterial ribosomal protein bS16 family.</text>
</comment>
<comment type="sequence caution" evidence="2">
    <conflict type="erroneous gene model prediction">
        <sequence resource="EMBL-CDS" id="BAD26757"/>
    </conflict>
</comment>
<reference key="1">
    <citation type="journal article" date="2004" name="Gene">
        <title>The complete nucleotide sequence of wild rice (Oryza nivara) chloroplast genome: first genome wide comparative sequence analysis of wild and cultivated rice.</title>
        <authorList>
            <person name="Masood M.S."/>
            <person name="Nishikawa T."/>
            <person name="Fukuoka S."/>
            <person name="Njenga P.K."/>
            <person name="Tsudzuki T."/>
            <person name="Kadowaki K."/>
        </authorList>
    </citation>
    <scope>NUCLEOTIDE SEQUENCE [LARGE SCALE GENOMIC DNA]</scope>
    <source>
        <strain evidence="3">cv. SL10</strain>
    </source>
</reference>
<organism>
    <name type="scientific">Oryza nivara</name>
    <name type="common">Indian wild rice</name>
    <name type="synonym">Oryza sativa f. spontanea</name>
    <dbReference type="NCBI Taxonomy" id="4536"/>
    <lineage>
        <taxon>Eukaryota</taxon>
        <taxon>Viridiplantae</taxon>
        <taxon>Streptophyta</taxon>
        <taxon>Embryophyta</taxon>
        <taxon>Tracheophyta</taxon>
        <taxon>Spermatophyta</taxon>
        <taxon>Magnoliopsida</taxon>
        <taxon>Liliopsida</taxon>
        <taxon>Poales</taxon>
        <taxon>Poaceae</taxon>
        <taxon>BOP clade</taxon>
        <taxon>Oryzoideae</taxon>
        <taxon>Oryzeae</taxon>
        <taxon>Oryzinae</taxon>
        <taxon>Oryza</taxon>
    </lineage>
</organism>
<evidence type="ECO:0000255" key="1">
    <source>
        <dbReference type="HAMAP-Rule" id="MF_00385"/>
    </source>
</evidence>
<evidence type="ECO:0000305" key="2"/>
<evidence type="ECO:0000312" key="3">
    <source>
        <dbReference type="Proteomes" id="UP000006591"/>
    </source>
</evidence>
<name>RR16_ORYNI</name>
<protein>
    <recommendedName>
        <fullName evidence="1">Small ribosomal subunit protein bS16c</fullName>
    </recommendedName>
    <alternativeName>
        <fullName evidence="2">30S ribosomal protein S16, chloroplastic</fullName>
    </alternativeName>
</protein>
<dbReference type="EMBL" id="AP006728">
    <property type="protein sequence ID" value="BAD26757.1"/>
    <property type="status" value="ALT_SEQ"/>
    <property type="molecule type" value="Genomic_DNA"/>
</dbReference>
<dbReference type="RefSeq" id="YP_052728.1">
    <property type="nucleotide sequence ID" value="NC_005973.1"/>
</dbReference>
<dbReference type="SMR" id="Q6ENJ5"/>
<dbReference type="STRING" id="4536.Q6ENJ5"/>
<dbReference type="GeneID" id="2885960"/>
<dbReference type="Proteomes" id="UP000006591">
    <property type="component" value="Chloroplast"/>
</dbReference>
<dbReference type="GO" id="GO:0009507">
    <property type="term" value="C:chloroplast"/>
    <property type="evidence" value="ECO:0007669"/>
    <property type="project" value="UniProtKB-SubCell"/>
</dbReference>
<dbReference type="GO" id="GO:0005739">
    <property type="term" value="C:mitochondrion"/>
    <property type="evidence" value="ECO:0007669"/>
    <property type="project" value="GOC"/>
</dbReference>
<dbReference type="GO" id="GO:0009536">
    <property type="term" value="C:plastid"/>
    <property type="evidence" value="ECO:0000305"/>
    <property type="project" value="Gramene"/>
</dbReference>
<dbReference type="GO" id="GO:0015935">
    <property type="term" value="C:small ribosomal subunit"/>
    <property type="evidence" value="ECO:0007669"/>
    <property type="project" value="TreeGrafter"/>
</dbReference>
<dbReference type="GO" id="GO:0003735">
    <property type="term" value="F:structural constituent of ribosome"/>
    <property type="evidence" value="ECO:0007669"/>
    <property type="project" value="InterPro"/>
</dbReference>
<dbReference type="GO" id="GO:0032543">
    <property type="term" value="P:mitochondrial translation"/>
    <property type="evidence" value="ECO:0007669"/>
    <property type="project" value="TreeGrafter"/>
</dbReference>
<dbReference type="FunFam" id="3.30.1320.10:FF:000003">
    <property type="entry name" value="30S ribosomal protein S16, chloroplastic"/>
    <property type="match status" value="1"/>
</dbReference>
<dbReference type="Gene3D" id="3.30.1320.10">
    <property type="match status" value="1"/>
</dbReference>
<dbReference type="HAMAP" id="MF_00385">
    <property type="entry name" value="Ribosomal_bS16"/>
    <property type="match status" value="1"/>
</dbReference>
<dbReference type="InterPro" id="IPR000307">
    <property type="entry name" value="Ribosomal_bS16"/>
</dbReference>
<dbReference type="InterPro" id="IPR020592">
    <property type="entry name" value="Ribosomal_bS16_CS"/>
</dbReference>
<dbReference type="InterPro" id="IPR023803">
    <property type="entry name" value="Ribosomal_bS16_dom_sf"/>
</dbReference>
<dbReference type="NCBIfam" id="TIGR00002">
    <property type="entry name" value="S16"/>
    <property type="match status" value="1"/>
</dbReference>
<dbReference type="PANTHER" id="PTHR12919">
    <property type="entry name" value="30S RIBOSOMAL PROTEIN S16"/>
    <property type="match status" value="1"/>
</dbReference>
<dbReference type="PANTHER" id="PTHR12919:SF20">
    <property type="entry name" value="SMALL RIBOSOMAL SUBUNIT PROTEIN BS16M"/>
    <property type="match status" value="1"/>
</dbReference>
<dbReference type="Pfam" id="PF00886">
    <property type="entry name" value="Ribosomal_S16"/>
    <property type="match status" value="1"/>
</dbReference>
<dbReference type="SUPFAM" id="SSF54565">
    <property type="entry name" value="Ribosomal protein S16"/>
    <property type="match status" value="1"/>
</dbReference>
<dbReference type="PROSITE" id="PS00732">
    <property type="entry name" value="RIBOSOMAL_S16"/>
    <property type="match status" value="1"/>
</dbReference>
<accession>Q6ENJ5</accession>
<sequence length="85" mass="10056">MLKLRLKRCGRKQRAVYRIVAIDVRSRREGRDLRKVGFYDPIKNQTCLNVPAILYFLEKGAQPTRTVSDILRKAEFFKEKERTLS</sequence>
<feature type="chain" id="PRO_0000167311" description="Small ribosomal subunit protein bS16c">
    <location>
        <begin position="1"/>
        <end position="85"/>
    </location>
</feature>
<keyword id="KW-0150">Chloroplast</keyword>
<keyword id="KW-0934">Plastid</keyword>
<keyword id="KW-1185">Reference proteome</keyword>
<keyword id="KW-0687">Ribonucleoprotein</keyword>
<keyword id="KW-0689">Ribosomal protein</keyword>
<proteinExistence type="inferred from homology"/>
<geneLocation type="chloroplast"/>
<gene>
    <name evidence="1" type="primary">rps16</name>
</gene>